<reference key="1">
    <citation type="journal article" date="2009" name="PLoS Genet.">
        <title>Organised genome dynamics in the Escherichia coli species results in highly diverse adaptive paths.</title>
        <authorList>
            <person name="Touchon M."/>
            <person name="Hoede C."/>
            <person name="Tenaillon O."/>
            <person name="Barbe V."/>
            <person name="Baeriswyl S."/>
            <person name="Bidet P."/>
            <person name="Bingen E."/>
            <person name="Bonacorsi S."/>
            <person name="Bouchier C."/>
            <person name="Bouvet O."/>
            <person name="Calteau A."/>
            <person name="Chiapello H."/>
            <person name="Clermont O."/>
            <person name="Cruveiller S."/>
            <person name="Danchin A."/>
            <person name="Diard M."/>
            <person name="Dossat C."/>
            <person name="Karoui M.E."/>
            <person name="Frapy E."/>
            <person name="Garry L."/>
            <person name="Ghigo J.M."/>
            <person name="Gilles A.M."/>
            <person name="Johnson J."/>
            <person name="Le Bouguenec C."/>
            <person name="Lescat M."/>
            <person name="Mangenot S."/>
            <person name="Martinez-Jehanne V."/>
            <person name="Matic I."/>
            <person name="Nassif X."/>
            <person name="Oztas S."/>
            <person name="Petit M.A."/>
            <person name="Pichon C."/>
            <person name="Rouy Z."/>
            <person name="Ruf C.S."/>
            <person name="Schneider D."/>
            <person name="Tourret J."/>
            <person name="Vacherie B."/>
            <person name="Vallenet D."/>
            <person name="Medigue C."/>
            <person name="Rocha E.P.C."/>
            <person name="Denamur E."/>
        </authorList>
    </citation>
    <scope>NUCLEOTIDE SEQUENCE [LARGE SCALE GENOMIC DNA]</scope>
    <source>
        <strain>S88 / ExPEC</strain>
    </source>
</reference>
<keyword id="KW-0560">Oxidoreductase</keyword>
<keyword id="KW-0663">Pyridoxal phosphate</keyword>
<keyword id="KW-1185">Reference proteome</keyword>
<name>GCSP_ECO45</name>
<gene>
    <name evidence="1" type="primary">gcvP</name>
    <name type="ordered locus">ECS88_3182</name>
</gene>
<dbReference type="EC" id="1.4.4.2" evidence="1"/>
<dbReference type="EMBL" id="CU928161">
    <property type="protein sequence ID" value="CAR04418.1"/>
    <property type="molecule type" value="Genomic_DNA"/>
</dbReference>
<dbReference type="RefSeq" id="WP_000195072.1">
    <property type="nucleotide sequence ID" value="NC_011742.1"/>
</dbReference>
<dbReference type="SMR" id="B7MM89"/>
<dbReference type="KEGG" id="ecz:ECS88_3182"/>
<dbReference type="HOGENOM" id="CLU_004620_1_1_6"/>
<dbReference type="Proteomes" id="UP000000747">
    <property type="component" value="Chromosome"/>
</dbReference>
<dbReference type="GO" id="GO:0005829">
    <property type="term" value="C:cytosol"/>
    <property type="evidence" value="ECO:0007669"/>
    <property type="project" value="TreeGrafter"/>
</dbReference>
<dbReference type="GO" id="GO:0005960">
    <property type="term" value="C:glycine cleavage complex"/>
    <property type="evidence" value="ECO:0007669"/>
    <property type="project" value="TreeGrafter"/>
</dbReference>
<dbReference type="GO" id="GO:0016594">
    <property type="term" value="F:glycine binding"/>
    <property type="evidence" value="ECO:0007669"/>
    <property type="project" value="TreeGrafter"/>
</dbReference>
<dbReference type="GO" id="GO:0004375">
    <property type="term" value="F:glycine dehydrogenase (decarboxylating) activity"/>
    <property type="evidence" value="ECO:0007669"/>
    <property type="project" value="UniProtKB-EC"/>
</dbReference>
<dbReference type="GO" id="GO:0030170">
    <property type="term" value="F:pyridoxal phosphate binding"/>
    <property type="evidence" value="ECO:0007669"/>
    <property type="project" value="TreeGrafter"/>
</dbReference>
<dbReference type="GO" id="GO:0019464">
    <property type="term" value="P:glycine decarboxylation via glycine cleavage system"/>
    <property type="evidence" value="ECO:0007669"/>
    <property type="project" value="UniProtKB-UniRule"/>
</dbReference>
<dbReference type="CDD" id="cd00613">
    <property type="entry name" value="GDC-P"/>
    <property type="match status" value="2"/>
</dbReference>
<dbReference type="FunFam" id="3.40.640.10:FF:000005">
    <property type="entry name" value="Glycine dehydrogenase (decarboxylating), mitochondrial"/>
    <property type="match status" value="1"/>
</dbReference>
<dbReference type="FunFam" id="3.90.1150.10:FF:000007">
    <property type="entry name" value="Glycine dehydrogenase (decarboxylating), mitochondrial"/>
    <property type="match status" value="1"/>
</dbReference>
<dbReference type="FunFam" id="3.40.640.10:FF:000007">
    <property type="entry name" value="glycine dehydrogenase (Decarboxylating), mitochondrial"/>
    <property type="match status" value="1"/>
</dbReference>
<dbReference type="Gene3D" id="3.90.1150.10">
    <property type="entry name" value="Aspartate Aminotransferase, domain 1"/>
    <property type="match status" value="1"/>
</dbReference>
<dbReference type="Gene3D" id="3.40.640.10">
    <property type="entry name" value="Type I PLP-dependent aspartate aminotransferase-like (Major domain)"/>
    <property type="match status" value="2"/>
</dbReference>
<dbReference type="HAMAP" id="MF_00711">
    <property type="entry name" value="GcvP"/>
    <property type="match status" value="1"/>
</dbReference>
<dbReference type="InterPro" id="IPR003437">
    <property type="entry name" value="GcvP"/>
</dbReference>
<dbReference type="InterPro" id="IPR049316">
    <property type="entry name" value="GDC-P_C"/>
</dbReference>
<dbReference type="InterPro" id="IPR049315">
    <property type="entry name" value="GDC-P_N"/>
</dbReference>
<dbReference type="InterPro" id="IPR020581">
    <property type="entry name" value="GDC_P"/>
</dbReference>
<dbReference type="InterPro" id="IPR015424">
    <property type="entry name" value="PyrdxlP-dep_Trfase"/>
</dbReference>
<dbReference type="InterPro" id="IPR015421">
    <property type="entry name" value="PyrdxlP-dep_Trfase_major"/>
</dbReference>
<dbReference type="InterPro" id="IPR015422">
    <property type="entry name" value="PyrdxlP-dep_Trfase_small"/>
</dbReference>
<dbReference type="NCBIfam" id="TIGR00461">
    <property type="entry name" value="gcvP"/>
    <property type="match status" value="1"/>
</dbReference>
<dbReference type="NCBIfam" id="NF003346">
    <property type="entry name" value="PRK04366.1"/>
    <property type="match status" value="1"/>
</dbReference>
<dbReference type="PANTHER" id="PTHR11773:SF13">
    <property type="entry name" value="GLYCINE DEHYDROGENASE (DECARBOXYLATING)"/>
    <property type="match status" value="1"/>
</dbReference>
<dbReference type="PANTHER" id="PTHR11773">
    <property type="entry name" value="GLYCINE DEHYDROGENASE, DECARBOXYLATING"/>
    <property type="match status" value="1"/>
</dbReference>
<dbReference type="Pfam" id="PF21478">
    <property type="entry name" value="GcvP2_C"/>
    <property type="match status" value="1"/>
</dbReference>
<dbReference type="Pfam" id="PF02347">
    <property type="entry name" value="GDC-P"/>
    <property type="match status" value="2"/>
</dbReference>
<dbReference type="SUPFAM" id="SSF53383">
    <property type="entry name" value="PLP-dependent transferases"/>
    <property type="match status" value="2"/>
</dbReference>
<feature type="chain" id="PRO_1000190212" description="Glycine dehydrogenase (decarboxylating)">
    <location>
        <begin position="1"/>
        <end position="957"/>
    </location>
</feature>
<feature type="modified residue" description="N6-(pyridoxal phosphate)lysine" evidence="1">
    <location>
        <position position="708"/>
    </location>
</feature>
<accession>B7MM89</accession>
<proteinExistence type="inferred from homology"/>
<protein>
    <recommendedName>
        <fullName evidence="1">Glycine dehydrogenase (decarboxylating)</fullName>
        <ecNumber evidence="1">1.4.4.2</ecNumber>
    </recommendedName>
    <alternativeName>
        <fullName evidence="1">Glycine cleavage system P-protein</fullName>
    </alternativeName>
    <alternativeName>
        <fullName evidence="1">Glycine decarboxylase</fullName>
    </alternativeName>
    <alternativeName>
        <fullName evidence="1">Glycine dehydrogenase (aminomethyl-transferring)</fullName>
    </alternativeName>
</protein>
<organism>
    <name type="scientific">Escherichia coli O45:K1 (strain S88 / ExPEC)</name>
    <dbReference type="NCBI Taxonomy" id="585035"/>
    <lineage>
        <taxon>Bacteria</taxon>
        <taxon>Pseudomonadati</taxon>
        <taxon>Pseudomonadota</taxon>
        <taxon>Gammaproteobacteria</taxon>
        <taxon>Enterobacterales</taxon>
        <taxon>Enterobacteriaceae</taxon>
        <taxon>Escherichia</taxon>
    </lineage>
</organism>
<evidence type="ECO:0000255" key="1">
    <source>
        <dbReference type="HAMAP-Rule" id="MF_00711"/>
    </source>
</evidence>
<sequence length="957" mass="104321">MTQTLSQLENSGAFIERHIGPDAAQQQEMLNAVGAQSLNALTGQIVPKDIQLATPPQVGAPATEYAALAELKAIASRNKRFTSYIGMGYTAVQLPPVILRNMLENPGWYTAYTPYQPEVSQGRLEALLNFQQVTLDLTGLDMASASLLDEATAAAEAMAMAKRVSKLKNANRFFVASDVHPQTLDVVRTRAETFGFEVIVDDAQKVLDHQDVFGVLLQQVGTTGEIHDYTALISELKSRKIVVSVAADIMALVLLTAPGKQGADIVFGSAQRFGVPMGYGGPHAAFFAAKDEYKRSMPGRIIGVSKDAAGNTALRMAMQTREQHIRREKANSNICTSQVLLANIASLYAVYHGPVGLKRIANRIHRLTDILAAGLQQKGLKLRHAHYFDTLCVEVVDKAGVLARAEAAEINLRSDILNAVGITLDETTTRENVMQLFSVLLGDNHGLDIDTLDKDVAHDSRSIQAAMLRDDEILTHPVFNRYHSETEMMRYMHSLERKDLALNQAMIPLGSCTMKLNAAAEMIPITWPEFAELHPFCPPEQAEGYQQMIAQLADWLVKLTGYDAVCMQPNSGAQGEYAGLLAIRHYHESRNEGHRDICLIPASAHGTNPASAHMAGMQVVVVACDKNGNIDLTDLRAKAEQAGDNLSCIMVTYPSTHGVYEETIREVCEVVHQFGGQVYLDGANMNAQVGITSPGFIGADVSHLNLHKTFCIPHGGGGPGMGPIGVKAHLAPFVPGHSVVQIEGMLTRQGAVSAAPFGSASILPISWMYIRMMGAEGLKKASQVAILNANYIASRLQDAFPVLYTGRDGRVAHECILDIRPLKEETGISELDIAKRLIDYGFHAPTMSFPVAGTLMVEPTESESKVELDRFIDAMLAIRAEIDQVKAGVWPLEDNPLVNAPHIQSELVAEWAHPYSREVAVFPAGVADKYWPTVKRLDDVYGDRNLFCSCVPISEYQ</sequence>
<comment type="function">
    <text evidence="1">The glycine cleavage system catalyzes the degradation of glycine. The P protein binds the alpha-amino group of glycine through its pyridoxal phosphate cofactor; CO(2) is released and the remaining methylamine moiety is then transferred to the lipoamide cofactor of the H protein.</text>
</comment>
<comment type="catalytic activity">
    <reaction evidence="1">
        <text>N(6)-[(R)-lipoyl]-L-lysyl-[glycine-cleavage complex H protein] + glycine + H(+) = N(6)-[(R)-S(8)-aminomethyldihydrolipoyl]-L-lysyl-[glycine-cleavage complex H protein] + CO2</text>
        <dbReference type="Rhea" id="RHEA:24304"/>
        <dbReference type="Rhea" id="RHEA-COMP:10494"/>
        <dbReference type="Rhea" id="RHEA-COMP:10495"/>
        <dbReference type="ChEBI" id="CHEBI:15378"/>
        <dbReference type="ChEBI" id="CHEBI:16526"/>
        <dbReference type="ChEBI" id="CHEBI:57305"/>
        <dbReference type="ChEBI" id="CHEBI:83099"/>
        <dbReference type="ChEBI" id="CHEBI:83143"/>
        <dbReference type="EC" id="1.4.4.2"/>
    </reaction>
</comment>
<comment type="cofactor">
    <cofactor evidence="1">
        <name>pyridoxal 5'-phosphate</name>
        <dbReference type="ChEBI" id="CHEBI:597326"/>
    </cofactor>
</comment>
<comment type="subunit">
    <text evidence="1">The glycine cleavage system is composed of four proteins: P, T, L and H.</text>
</comment>
<comment type="similarity">
    <text evidence="1">Belongs to the GcvP family.</text>
</comment>